<organism>
    <name type="scientific">Bartonella bacilliformis (strain ATCC 35685 / KC583 / Herrer 020/F12,63)</name>
    <dbReference type="NCBI Taxonomy" id="360095"/>
    <lineage>
        <taxon>Bacteria</taxon>
        <taxon>Pseudomonadati</taxon>
        <taxon>Pseudomonadota</taxon>
        <taxon>Alphaproteobacteria</taxon>
        <taxon>Hyphomicrobiales</taxon>
        <taxon>Bartonellaceae</taxon>
        <taxon>Bartonella</taxon>
    </lineage>
</organism>
<protein>
    <recommendedName>
        <fullName evidence="1">Ribosome maturation factor RimP</fullName>
    </recommendedName>
</protein>
<dbReference type="EMBL" id="CP000524">
    <property type="protein sequence ID" value="ABM44680.1"/>
    <property type="molecule type" value="Genomic_DNA"/>
</dbReference>
<dbReference type="SMR" id="A1UU47"/>
<dbReference type="STRING" id="360095.BARBAKC583_1251"/>
<dbReference type="KEGG" id="bbk:BARBAKC583_1251"/>
<dbReference type="eggNOG" id="COG0779">
    <property type="taxonomic scope" value="Bacteria"/>
</dbReference>
<dbReference type="HOGENOM" id="CLU_070525_0_1_5"/>
<dbReference type="Proteomes" id="UP000000643">
    <property type="component" value="Chromosome"/>
</dbReference>
<dbReference type="GO" id="GO:0005829">
    <property type="term" value="C:cytosol"/>
    <property type="evidence" value="ECO:0007669"/>
    <property type="project" value="TreeGrafter"/>
</dbReference>
<dbReference type="GO" id="GO:0000028">
    <property type="term" value="P:ribosomal small subunit assembly"/>
    <property type="evidence" value="ECO:0007669"/>
    <property type="project" value="TreeGrafter"/>
</dbReference>
<dbReference type="GO" id="GO:0006412">
    <property type="term" value="P:translation"/>
    <property type="evidence" value="ECO:0007669"/>
    <property type="project" value="TreeGrafter"/>
</dbReference>
<dbReference type="CDD" id="cd01734">
    <property type="entry name" value="YlxS_C"/>
    <property type="match status" value="1"/>
</dbReference>
<dbReference type="Gene3D" id="2.30.30.180">
    <property type="entry name" value="Ribosome maturation factor RimP, C-terminal domain"/>
    <property type="match status" value="1"/>
</dbReference>
<dbReference type="Gene3D" id="3.30.300.70">
    <property type="entry name" value="RimP-like superfamily, N-terminal"/>
    <property type="match status" value="1"/>
</dbReference>
<dbReference type="HAMAP" id="MF_01077">
    <property type="entry name" value="RimP"/>
    <property type="match status" value="1"/>
</dbReference>
<dbReference type="InterPro" id="IPR003728">
    <property type="entry name" value="Ribosome_maturation_RimP"/>
</dbReference>
<dbReference type="InterPro" id="IPR028998">
    <property type="entry name" value="RimP_C"/>
</dbReference>
<dbReference type="InterPro" id="IPR036847">
    <property type="entry name" value="RimP_C_sf"/>
</dbReference>
<dbReference type="InterPro" id="IPR028989">
    <property type="entry name" value="RimP_N"/>
</dbReference>
<dbReference type="InterPro" id="IPR035956">
    <property type="entry name" value="RimP_N_sf"/>
</dbReference>
<dbReference type="NCBIfam" id="NF000932">
    <property type="entry name" value="PRK00092.2-5"/>
    <property type="match status" value="1"/>
</dbReference>
<dbReference type="PANTHER" id="PTHR33867">
    <property type="entry name" value="RIBOSOME MATURATION FACTOR RIMP"/>
    <property type="match status" value="1"/>
</dbReference>
<dbReference type="PANTHER" id="PTHR33867:SF1">
    <property type="entry name" value="RIBOSOME MATURATION FACTOR RIMP"/>
    <property type="match status" value="1"/>
</dbReference>
<dbReference type="Pfam" id="PF17384">
    <property type="entry name" value="DUF150_C"/>
    <property type="match status" value="1"/>
</dbReference>
<dbReference type="Pfam" id="PF02576">
    <property type="entry name" value="RimP_N"/>
    <property type="match status" value="1"/>
</dbReference>
<dbReference type="SUPFAM" id="SSF74942">
    <property type="entry name" value="YhbC-like, C-terminal domain"/>
    <property type="match status" value="1"/>
</dbReference>
<dbReference type="SUPFAM" id="SSF75420">
    <property type="entry name" value="YhbC-like, N-terminal domain"/>
    <property type="match status" value="1"/>
</dbReference>
<feature type="chain" id="PRO_0000384611" description="Ribosome maturation factor RimP">
    <location>
        <begin position="1"/>
        <end position="209"/>
    </location>
</feature>
<evidence type="ECO:0000255" key="1">
    <source>
        <dbReference type="HAMAP-Rule" id="MF_01077"/>
    </source>
</evidence>
<sequence length="209" mass="23760">MQYINATEIMDDIDEPRLFEEDGVEALVVALVAPLLKPLGYRLVRVKLLGLNGLTLQIMAERADGTMTIEDCEIISKTISPLLDVQNVIERKYHLEISSPGIDRPLVRKSDFFHWQGYTAKIETRTIVNGRRKFRGALENVTQDGFILNIDAAPEEETVYVSFSNITNAHLVLTDKLIRDALKKDKNLRQQLIPEDDFNISESEINFSN</sequence>
<accession>A1UU47</accession>
<name>RIMP_BARBK</name>
<proteinExistence type="inferred from homology"/>
<reference key="1">
    <citation type="submission" date="2006-12" db="EMBL/GenBank/DDBJ databases">
        <authorList>
            <person name="Hendrix L."/>
            <person name="Mohamoud Y."/>
            <person name="Radune D."/>
            <person name="Shvartsbeyn A."/>
            <person name="Daugherty S."/>
            <person name="Dodson R."/>
            <person name="Durkin A.S."/>
            <person name="Harkins D."/>
            <person name="Huot H."/>
            <person name="Kothari S.P."/>
            <person name="Madupu R."/>
            <person name="Li J."/>
            <person name="Nelson W.C."/>
            <person name="Shrivastava S."/>
            <person name="Giglio M.G."/>
            <person name="Haft D."/>
            <person name="Selengut J."/>
            <person name="Fraser-Ligget C."/>
            <person name="Seshadri R."/>
        </authorList>
    </citation>
    <scope>NUCLEOTIDE SEQUENCE [LARGE SCALE GENOMIC DNA]</scope>
    <source>
        <strain>ATCC 35685 / KC583 / Herrer 020/F12,63</strain>
    </source>
</reference>
<comment type="function">
    <text evidence="1">Required for maturation of 30S ribosomal subunits.</text>
</comment>
<comment type="subcellular location">
    <subcellularLocation>
        <location evidence="1">Cytoplasm</location>
    </subcellularLocation>
</comment>
<comment type="similarity">
    <text evidence="1">Belongs to the RimP family.</text>
</comment>
<gene>
    <name evidence="1" type="primary">rimP</name>
    <name type="ordered locus">BARBAKC583_1251</name>
</gene>
<keyword id="KW-0963">Cytoplasm</keyword>
<keyword id="KW-0690">Ribosome biogenesis</keyword>